<comment type="function">
    <text evidence="1">Could be responsible for synthesis of pseudouridine from uracil-13 in transfer RNAs.</text>
</comment>
<comment type="catalytic activity">
    <reaction evidence="1">
        <text>uridine(13) in tRNA = pseudouridine(13) in tRNA</text>
        <dbReference type="Rhea" id="RHEA:42540"/>
        <dbReference type="Rhea" id="RHEA-COMP:10105"/>
        <dbReference type="Rhea" id="RHEA-COMP:10106"/>
        <dbReference type="ChEBI" id="CHEBI:65314"/>
        <dbReference type="ChEBI" id="CHEBI:65315"/>
        <dbReference type="EC" id="5.4.99.27"/>
    </reaction>
</comment>
<comment type="similarity">
    <text evidence="1">Belongs to the pseudouridine synthase TruD family.</text>
</comment>
<feature type="chain" id="PRO_0000152556" description="Probable tRNA pseudouridine synthase D">
    <location>
        <begin position="1"/>
        <end position="411"/>
    </location>
</feature>
<feature type="domain" description="TRUD" evidence="1">
    <location>
        <begin position="150"/>
        <end position="369"/>
    </location>
</feature>
<feature type="active site" description="Nucleophile" evidence="1">
    <location>
        <position position="79"/>
    </location>
</feature>
<dbReference type="EC" id="5.4.99.27" evidence="1"/>
<dbReference type="EMBL" id="AL445063">
    <property type="protein sequence ID" value="CAC11360.1"/>
    <property type="molecule type" value="Genomic_DNA"/>
</dbReference>
<dbReference type="SMR" id="Q9HLL3"/>
<dbReference type="FunCoup" id="Q9HLL3">
    <property type="interactions" value="29"/>
</dbReference>
<dbReference type="STRING" id="273075.gene:9571430"/>
<dbReference type="PaxDb" id="273075-Ta0214"/>
<dbReference type="EnsemblBacteria" id="CAC11360">
    <property type="protein sequence ID" value="CAC11360"/>
    <property type="gene ID" value="CAC11360"/>
</dbReference>
<dbReference type="KEGG" id="tac:Ta0214"/>
<dbReference type="eggNOG" id="arCOG04252">
    <property type="taxonomic scope" value="Archaea"/>
</dbReference>
<dbReference type="HOGENOM" id="CLU_005281_4_1_2"/>
<dbReference type="InParanoid" id="Q9HLL3"/>
<dbReference type="OrthoDB" id="1798at2157"/>
<dbReference type="Proteomes" id="UP000001024">
    <property type="component" value="Chromosome"/>
</dbReference>
<dbReference type="GO" id="GO:0003723">
    <property type="term" value="F:RNA binding"/>
    <property type="evidence" value="ECO:0007669"/>
    <property type="project" value="InterPro"/>
</dbReference>
<dbReference type="GO" id="GO:0160150">
    <property type="term" value="F:tRNA pseudouridine(13) synthase activity"/>
    <property type="evidence" value="ECO:0007669"/>
    <property type="project" value="UniProtKB-EC"/>
</dbReference>
<dbReference type="GO" id="GO:0031119">
    <property type="term" value="P:tRNA pseudouridine synthesis"/>
    <property type="evidence" value="ECO:0007669"/>
    <property type="project" value="UniProtKB-UniRule"/>
</dbReference>
<dbReference type="CDD" id="cd02577">
    <property type="entry name" value="PSTD1"/>
    <property type="match status" value="1"/>
</dbReference>
<dbReference type="Gene3D" id="1.10.1510.30">
    <property type="match status" value="1"/>
</dbReference>
<dbReference type="Gene3D" id="3.30.70.3160">
    <property type="match status" value="1"/>
</dbReference>
<dbReference type="Gene3D" id="3.30.2350.20">
    <property type="entry name" value="TruD, catalytic domain"/>
    <property type="match status" value="1"/>
</dbReference>
<dbReference type="HAMAP" id="MF_01082">
    <property type="entry name" value="TruD"/>
    <property type="match status" value="1"/>
</dbReference>
<dbReference type="InterPro" id="IPR020103">
    <property type="entry name" value="PsdUridine_synth_cat_dom_sf"/>
</dbReference>
<dbReference type="InterPro" id="IPR001656">
    <property type="entry name" value="PsdUridine_synth_TruD"/>
</dbReference>
<dbReference type="InterPro" id="IPR020119">
    <property type="entry name" value="PsdUridine_synth_TruD_CS"/>
</dbReference>
<dbReference type="InterPro" id="IPR011760">
    <property type="entry name" value="PsdUridine_synth_TruD_insert"/>
</dbReference>
<dbReference type="InterPro" id="IPR042214">
    <property type="entry name" value="TruD_catalytic"/>
</dbReference>
<dbReference type="NCBIfam" id="TIGR00094">
    <property type="entry name" value="tRNA_TruD_broad"/>
    <property type="match status" value="1"/>
</dbReference>
<dbReference type="PANTHER" id="PTHR13326:SF21">
    <property type="entry name" value="PSEUDOURIDYLATE SYNTHASE PUS7L"/>
    <property type="match status" value="1"/>
</dbReference>
<dbReference type="PANTHER" id="PTHR13326">
    <property type="entry name" value="TRNA PSEUDOURIDINE SYNTHASE D"/>
    <property type="match status" value="1"/>
</dbReference>
<dbReference type="Pfam" id="PF01142">
    <property type="entry name" value="TruD"/>
    <property type="match status" value="1"/>
</dbReference>
<dbReference type="SUPFAM" id="SSF55120">
    <property type="entry name" value="Pseudouridine synthase"/>
    <property type="match status" value="1"/>
</dbReference>
<dbReference type="PROSITE" id="PS50984">
    <property type="entry name" value="TRUD"/>
    <property type="match status" value="1"/>
</dbReference>
<dbReference type="PROSITE" id="PS01268">
    <property type="entry name" value="UPF0024"/>
    <property type="match status" value="1"/>
</dbReference>
<gene>
    <name evidence="1" type="primary">truD</name>
    <name type="ordered locus">Ta0214</name>
</gene>
<evidence type="ECO:0000255" key="1">
    <source>
        <dbReference type="HAMAP-Rule" id="MF_01082"/>
    </source>
</evidence>
<organism>
    <name type="scientific">Thermoplasma acidophilum (strain ATCC 25905 / DSM 1728 / JCM 9062 / NBRC 15155 / AMRC-C165)</name>
    <dbReference type="NCBI Taxonomy" id="273075"/>
    <lineage>
        <taxon>Archaea</taxon>
        <taxon>Methanobacteriati</taxon>
        <taxon>Thermoplasmatota</taxon>
        <taxon>Thermoplasmata</taxon>
        <taxon>Thermoplasmatales</taxon>
        <taxon>Thermoplasmataceae</taxon>
        <taxon>Thermoplasma</taxon>
    </lineage>
</organism>
<name>TRUD_THEAC</name>
<protein>
    <recommendedName>
        <fullName evidence="1">Probable tRNA pseudouridine synthase D</fullName>
        <ecNumber evidence="1">5.4.99.27</ecNumber>
    </recommendedName>
    <alternativeName>
        <fullName evidence="1">tRNA pseudouridine(13) synthase</fullName>
    </alternativeName>
    <alternativeName>
        <fullName evidence="1">tRNA pseudouridylate synthase D</fullName>
    </alternativeName>
    <alternativeName>
        <fullName evidence="1">tRNA-uridine isomerase D</fullName>
    </alternativeName>
</protein>
<sequence length="411" mass="47817">MSSTMSADQSNRARPVIRIKENPEDFTVEEVADIPKSDNGKYTIIKAEIIDWDTNRIVEEIASALRISRKRISYAGTKDKRARKIQYFCINAPVDVSVLAFKGFRIIDRFRSDHYLRLGDLTANHFRIRFQGASDDYIEQRYEKMMECGGFPNYFGQQRFGSRRRNTHDVGRLIVTGRYEDAVRLYLYDERYDIEDYRREFIETLDYNRALEKFPRTLRFERSIIGYYAQHHTFKGAFDALPKNLSIMFVHAYQSYLFNRMLSLRIEKYGLNRAIPGDTAFPVDRYFNPDKSRPVEVNEVNVDTINQLIERDRLRVALPIIGSEVGPDQSDFGEIEKKILEEEHVDRSMFRNSEYPHLSSTGDRRIVSAKPVDFSVSNSVMDFTLGRGIYATTLISTFGDLVDFDAESDGF</sequence>
<proteinExistence type="inferred from homology"/>
<accession>Q9HLL3</accession>
<reference key="1">
    <citation type="journal article" date="2000" name="Nature">
        <title>The genome sequence of the thermoacidophilic scavenger Thermoplasma acidophilum.</title>
        <authorList>
            <person name="Ruepp A."/>
            <person name="Graml W."/>
            <person name="Santos-Martinez M.-L."/>
            <person name="Koretke K.K."/>
            <person name="Volker C."/>
            <person name="Mewes H.-W."/>
            <person name="Frishman D."/>
            <person name="Stocker S."/>
            <person name="Lupas A.N."/>
            <person name="Baumeister W."/>
        </authorList>
    </citation>
    <scope>NUCLEOTIDE SEQUENCE [LARGE SCALE GENOMIC DNA]</scope>
    <source>
        <strain>ATCC 25905 / DSM 1728 / JCM 9062 / NBRC 15155 / AMRC-C165</strain>
    </source>
</reference>
<keyword id="KW-0413">Isomerase</keyword>
<keyword id="KW-1185">Reference proteome</keyword>
<keyword id="KW-0819">tRNA processing</keyword>